<gene>
    <name evidence="1" type="primary">aroA</name>
    <name type="ordered locus">MGAS10750_Spy1200</name>
</gene>
<keyword id="KW-0028">Amino-acid biosynthesis</keyword>
<keyword id="KW-0057">Aromatic amino acid biosynthesis</keyword>
<keyword id="KW-0963">Cytoplasm</keyword>
<keyword id="KW-0808">Transferase</keyword>
<comment type="function">
    <text evidence="1">Catalyzes the transfer of the enolpyruvyl moiety of phosphoenolpyruvate (PEP) to the 5-hydroxyl of shikimate-3-phosphate (S3P) to produce enolpyruvyl shikimate-3-phosphate and inorganic phosphate.</text>
</comment>
<comment type="catalytic activity">
    <reaction evidence="1">
        <text>3-phosphoshikimate + phosphoenolpyruvate = 5-O-(1-carboxyvinyl)-3-phosphoshikimate + phosphate</text>
        <dbReference type="Rhea" id="RHEA:21256"/>
        <dbReference type="ChEBI" id="CHEBI:43474"/>
        <dbReference type="ChEBI" id="CHEBI:57701"/>
        <dbReference type="ChEBI" id="CHEBI:58702"/>
        <dbReference type="ChEBI" id="CHEBI:145989"/>
        <dbReference type="EC" id="2.5.1.19"/>
    </reaction>
    <physiologicalReaction direction="left-to-right" evidence="1">
        <dbReference type="Rhea" id="RHEA:21257"/>
    </physiologicalReaction>
</comment>
<comment type="pathway">
    <text evidence="1">Metabolic intermediate biosynthesis; chorismate biosynthesis; chorismate from D-erythrose 4-phosphate and phosphoenolpyruvate: step 6/7.</text>
</comment>
<comment type="subunit">
    <text evidence="1">Monomer.</text>
</comment>
<comment type="subcellular location">
    <subcellularLocation>
        <location evidence="1">Cytoplasm</location>
    </subcellularLocation>
</comment>
<comment type="similarity">
    <text evidence="1">Belongs to the EPSP synthase family.</text>
</comment>
<evidence type="ECO:0000255" key="1">
    <source>
        <dbReference type="HAMAP-Rule" id="MF_00210"/>
    </source>
</evidence>
<name>AROA_STRPF</name>
<dbReference type="EC" id="2.5.1.19" evidence="1"/>
<dbReference type="EMBL" id="CP000262">
    <property type="protein sequence ID" value="ABF38150.1"/>
    <property type="molecule type" value="Genomic_DNA"/>
</dbReference>
<dbReference type="SMR" id="Q1J633"/>
<dbReference type="KEGG" id="spi:MGAS10750_Spy1200"/>
<dbReference type="HOGENOM" id="CLU_024321_0_1_9"/>
<dbReference type="UniPathway" id="UPA00053">
    <property type="reaction ID" value="UER00089"/>
</dbReference>
<dbReference type="Proteomes" id="UP000002434">
    <property type="component" value="Chromosome"/>
</dbReference>
<dbReference type="GO" id="GO:0005737">
    <property type="term" value="C:cytoplasm"/>
    <property type="evidence" value="ECO:0007669"/>
    <property type="project" value="UniProtKB-SubCell"/>
</dbReference>
<dbReference type="GO" id="GO:0003866">
    <property type="term" value="F:3-phosphoshikimate 1-carboxyvinyltransferase activity"/>
    <property type="evidence" value="ECO:0007669"/>
    <property type="project" value="UniProtKB-UniRule"/>
</dbReference>
<dbReference type="GO" id="GO:0008652">
    <property type="term" value="P:amino acid biosynthetic process"/>
    <property type="evidence" value="ECO:0007669"/>
    <property type="project" value="UniProtKB-KW"/>
</dbReference>
<dbReference type="GO" id="GO:0009073">
    <property type="term" value="P:aromatic amino acid family biosynthetic process"/>
    <property type="evidence" value="ECO:0007669"/>
    <property type="project" value="UniProtKB-KW"/>
</dbReference>
<dbReference type="GO" id="GO:0009423">
    <property type="term" value="P:chorismate biosynthetic process"/>
    <property type="evidence" value="ECO:0007669"/>
    <property type="project" value="UniProtKB-UniRule"/>
</dbReference>
<dbReference type="CDD" id="cd01556">
    <property type="entry name" value="EPSP_synthase"/>
    <property type="match status" value="1"/>
</dbReference>
<dbReference type="FunFam" id="3.65.10.10:FF:000005">
    <property type="entry name" value="3-phosphoshikimate 1-carboxyvinyltransferase"/>
    <property type="match status" value="1"/>
</dbReference>
<dbReference type="FunFam" id="3.65.10.10:FF:000006">
    <property type="entry name" value="3-phosphoshikimate 1-carboxyvinyltransferase"/>
    <property type="match status" value="1"/>
</dbReference>
<dbReference type="Gene3D" id="3.65.10.10">
    <property type="entry name" value="Enolpyruvate transferase domain"/>
    <property type="match status" value="2"/>
</dbReference>
<dbReference type="HAMAP" id="MF_00210">
    <property type="entry name" value="EPSP_synth"/>
    <property type="match status" value="1"/>
</dbReference>
<dbReference type="InterPro" id="IPR001986">
    <property type="entry name" value="Enolpyruvate_Tfrase_dom"/>
</dbReference>
<dbReference type="InterPro" id="IPR036968">
    <property type="entry name" value="Enolpyruvate_Tfrase_sf"/>
</dbReference>
<dbReference type="InterPro" id="IPR006264">
    <property type="entry name" value="EPSP_synthase"/>
</dbReference>
<dbReference type="InterPro" id="IPR023193">
    <property type="entry name" value="EPSP_synthase_CS"/>
</dbReference>
<dbReference type="InterPro" id="IPR013792">
    <property type="entry name" value="RNA3'P_cycl/enolpyr_Trfase_a/b"/>
</dbReference>
<dbReference type="NCBIfam" id="TIGR01356">
    <property type="entry name" value="aroA"/>
    <property type="match status" value="1"/>
</dbReference>
<dbReference type="PANTHER" id="PTHR21090">
    <property type="entry name" value="AROM/DEHYDROQUINATE SYNTHASE"/>
    <property type="match status" value="1"/>
</dbReference>
<dbReference type="PANTHER" id="PTHR21090:SF5">
    <property type="entry name" value="PENTAFUNCTIONAL AROM POLYPEPTIDE"/>
    <property type="match status" value="1"/>
</dbReference>
<dbReference type="Pfam" id="PF00275">
    <property type="entry name" value="EPSP_synthase"/>
    <property type="match status" value="1"/>
</dbReference>
<dbReference type="PIRSF" id="PIRSF000505">
    <property type="entry name" value="EPSPS"/>
    <property type="match status" value="1"/>
</dbReference>
<dbReference type="SUPFAM" id="SSF55205">
    <property type="entry name" value="EPT/RTPC-like"/>
    <property type="match status" value="1"/>
</dbReference>
<dbReference type="PROSITE" id="PS00104">
    <property type="entry name" value="EPSP_SYNTHASE_1"/>
    <property type="match status" value="1"/>
</dbReference>
<dbReference type="PROSITE" id="PS00885">
    <property type="entry name" value="EPSP_SYNTHASE_2"/>
    <property type="match status" value="1"/>
</dbReference>
<proteinExistence type="inferred from homology"/>
<protein>
    <recommendedName>
        <fullName evidence="1">3-phosphoshikimate 1-carboxyvinyltransferase</fullName>
        <ecNumber evidence="1">2.5.1.19</ecNumber>
    </recommendedName>
    <alternativeName>
        <fullName evidence="1">5-enolpyruvylshikimate-3-phosphate synthase</fullName>
        <shortName evidence="1">EPSP synthase</shortName>
        <shortName evidence="1">EPSPS</shortName>
    </alternativeName>
</protein>
<sequence length="427" mass="46257">MKLRTNAGPLQGTIQVPGDKSISHRAVILGAVAKGETRVKGLLKGEDVLSTIQAFRNLGVRIEEKDDQLVIEGQGFQGLTAPCQTLNMGNSGTSMRLIAGLLAGQPFSVKMIGDESLSKRPMDRIVYPLKQMGVEISGETDRQFPPLQLQGNHNLQPITYTLPISSAQVKSAILLAALQAKGTTQVVEKEITRNHTEEMIQQFGGRLIVDGKRITLVGPQQLTAQEITVPGDISSAAFWLVAGLIIPGSELLLKNVGVNPTRTGILEVVEKMGAQIVYEDMNKKEQVTSIRVVYSRLKGTIISGGLIPRLIDELPIIALLATQAQGTTCIKDAQELRVKETDRIQVVTDTLNSMGANIKATADGMIIKGPTVLYGANTSTYGDHRIGMMTAIAALLVKQGQVHLDKEEAIMTSYPTFFKDLERLCHD</sequence>
<reference key="1">
    <citation type="journal article" date="2006" name="Proc. Natl. Acad. Sci. U.S.A.">
        <title>Molecular genetic anatomy of inter- and intraserotype variation in the human bacterial pathogen group A Streptococcus.</title>
        <authorList>
            <person name="Beres S.B."/>
            <person name="Richter E.W."/>
            <person name="Nagiec M.J."/>
            <person name="Sumby P."/>
            <person name="Porcella S.F."/>
            <person name="DeLeo F.R."/>
            <person name="Musser J.M."/>
        </authorList>
    </citation>
    <scope>NUCLEOTIDE SEQUENCE [LARGE SCALE GENOMIC DNA]</scope>
    <source>
        <strain>MGAS10750</strain>
    </source>
</reference>
<accession>Q1J633</accession>
<feature type="chain" id="PRO_1000012494" description="3-phosphoshikimate 1-carboxyvinyltransferase">
    <location>
        <begin position="1"/>
        <end position="427"/>
    </location>
</feature>
<feature type="active site" description="Proton acceptor" evidence="1">
    <location>
        <position position="312"/>
    </location>
</feature>
<feature type="binding site" evidence="1">
    <location>
        <position position="20"/>
    </location>
    <ligand>
        <name>3-phosphoshikimate</name>
        <dbReference type="ChEBI" id="CHEBI:145989"/>
    </ligand>
</feature>
<feature type="binding site" evidence="1">
    <location>
        <position position="20"/>
    </location>
    <ligand>
        <name>phosphoenolpyruvate</name>
        <dbReference type="ChEBI" id="CHEBI:58702"/>
    </ligand>
</feature>
<feature type="binding site" evidence="1">
    <location>
        <position position="21"/>
    </location>
    <ligand>
        <name>3-phosphoshikimate</name>
        <dbReference type="ChEBI" id="CHEBI:145989"/>
    </ligand>
</feature>
<feature type="binding site" evidence="1">
    <location>
        <position position="25"/>
    </location>
    <ligand>
        <name>3-phosphoshikimate</name>
        <dbReference type="ChEBI" id="CHEBI:145989"/>
    </ligand>
</feature>
<feature type="binding site" evidence="1">
    <location>
        <position position="92"/>
    </location>
    <ligand>
        <name>phosphoenolpyruvate</name>
        <dbReference type="ChEBI" id="CHEBI:58702"/>
    </ligand>
</feature>
<feature type="binding site" evidence="1">
    <location>
        <position position="120"/>
    </location>
    <ligand>
        <name>phosphoenolpyruvate</name>
        <dbReference type="ChEBI" id="CHEBI:58702"/>
    </ligand>
</feature>
<feature type="binding site" evidence="1">
    <location>
        <position position="166"/>
    </location>
    <ligand>
        <name>3-phosphoshikimate</name>
        <dbReference type="ChEBI" id="CHEBI:145989"/>
    </ligand>
</feature>
<feature type="binding site" evidence="1">
    <location>
        <position position="168"/>
    </location>
    <ligand>
        <name>3-phosphoshikimate</name>
        <dbReference type="ChEBI" id="CHEBI:145989"/>
    </ligand>
</feature>
<feature type="binding site" evidence="1">
    <location>
        <position position="168"/>
    </location>
    <ligand>
        <name>phosphoenolpyruvate</name>
        <dbReference type="ChEBI" id="CHEBI:58702"/>
    </ligand>
</feature>
<feature type="binding site" evidence="1">
    <location>
        <position position="312"/>
    </location>
    <ligand>
        <name>3-phosphoshikimate</name>
        <dbReference type="ChEBI" id="CHEBI:145989"/>
    </ligand>
</feature>
<feature type="binding site" evidence="1">
    <location>
        <position position="339"/>
    </location>
    <ligand>
        <name>3-phosphoshikimate</name>
        <dbReference type="ChEBI" id="CHEBI:145989"/>
    </ligand>
</feature>
<feature type="binding site" evidence="1">
    <location>
        <position position="343"/>
    </location>
    <ligand>
        <name>phosphoenolpyruvate</name>
        <dbReference type="ChEBI" id="CHEBI:58702"/>
    </ligand>
</feature>
<feature type="binding site" evidence="1">
    <location>
        <position position="385"/>
    </location>
    <ligand>
        <name>phosphoenolpyruvate</name>
        <dbReference type="ChEBI" id="CHEBI:58702"/>
    </ligand>
</feature>
<organism>
    <name type="scientific">Streptococcus pyogenes serotype M4 (strain MGAS10750)</name>
    <dbReference type="NCBI Taxonomy" id="370554"/>
    <lineage>
        <taxon>Bacteria</taxon>
        <taxon>Bacillati</taxon>
        <taxon>Bacillota</taxon>
        <taxon>Bacilli</taxon>
        <taxon>Lactobacillales</taxon>
        <taxon>Streptococcaceae</taxon>
        <taxon>Streptococcus</taxon>
    </lineage>
</organism>